<sequence>VQWTAEEKQLITGLWGKVNVADCGAEALARLLIVYPWTQRFFASFGNLSSATAVIGNPMVRAHGKKVLTSFGEAVKNLDSIKSTFAQLSELHCDKLHVDPENFRLLGDILIIVLAAHFSKDFTPEAQQAWAKLVRAVAHALARKYH</sequence>
<organism>
    <name type="scientific">Apus apus</name>
    <name type="common">Common swift</name>
    <dbReference type="NCBI Taxonomy" id="8895"/>
    <lineage>
        <taxon>Eukaryota</taxon>
        <taxon>Metazoa</taxon>
        <taxon>Chordata</taxon>
        <taxon>Craniata</taxon>
        <taxon>Vertebrata</taxon>
        <taxon>Euteleostomi</taxon>
        <taxon>Archelosauria</taxon>
        <taxon>Archosauria</taxon>
        <taxon>Dinosauria</taxon>
        <taxon>Saurischia</taxon>
        <taxon>Theropoda</taxon>
        <taxon>Coelurosauria</taxon>
        <taxon>Aves</taxon>
        <taxon>Neognathae</taxon>
        <taxon>Neoaves</taxon>
        <taxon>Strisores</taxon>
        <taxon>Apodiformes</taxon>
        <taxon>Apodidae</taxon>
        <taxon>Apodinae</taxon>
        <taxon>Apus</taxon>
    </lineage>
</organism>
<name>HBB_APUAP</name>
<comment type="function">
    <text>Involved in oxygen transport from the lung to the various peripheral tissues.</text>
</comment>
<comment type="subunit">
    <text>Heterotetramer of two alpha chains and two beta chains.</text>
</comment>
<comment type="tissue specificity">
    <text>Red blood cells.</text>
</comment>
<comment type="similarity">
    <text evidence="1">Belongs to the globin family.</text>
</comment>
<proteinExistence type="evidence at protein level"/>
<gene>
    <name type="primary">HBB</name>
</gene>
<protein>
    <recommendedName>
        <fullName>Hemoglobin subunit beta</fullName>
    </recommendedName>
    <alternativeName>
        <fullName>Beta-globin</fullName>
    </alternativeName>
    <alternativeName>
        <fullName>Hemoglobin beta chain</fullName>
    </alternativeName>
</protein>
<feature type="chain" id="PRO_0000052879" description="Hemoglobin subunit beta">
    <location>
        <begin position="1"/>
        <end position="146"/>
    </location>
</feature>
<feature type="domain" description="Globin" evidence="1">
    <location>
        <begin position="2"/>
        <end position="146"/>
    </location>
</feature>
<feature type="binding site" description="distal binding residue">
    <location>
        <position position="63"/>
    </location>
    <ligand>
        <name>heme b</name>
        <dbReference type="ChEBI" id="CHEBI:60344"/>
    </ligand>
    <ligandPart>
        <name>Fe</name>
        <dbReference type="ChEBI" id="CHEBI:18248"/>
    </ligandPart>
</feature>
<feature type="binding site" description="proximal binding residue">
    <location>
        <position position="92"/>
    </location>
    <ligand>
        <name>heme b</name>
        <dbReference type="ChEBI" id="CHEBI:60344"/>
    </ligand>
    <ligandPart>
        <name>Fe</name>
        <dbReference type="ChEBI" id="CHEBI:18248"/>
    </ligandPart>
</feature>
<keyword id="KW-0903">Direct protein sequencing</keyword>
<keyword id="KW-0349">Heme</keyword>
<keyword id="KW-0408">Iron</keyword>
<keyword id="KW-0479">Metal-binding</keyword>
<keyword id="KW-0561">Oxygen transport</keyword>
<keyword id="KW-0813">Transport</keyword>
<evidence type="ECO:0000255" key="1">
    <source>
        <dbReference type="PROSITE-ProRule" id="PRU00238"/>
    </source>
</evidence>
<dbReference type="PIR" id="S07480">
    <property type="entry name" value="HBSI"/>
</dbReference>
<dbReference type="SMR" id="P15165"/>
<dbReference type="GO" id="GO:0072562">
    <property type="term" value="C:blood microparticle"/>
    <property type="evidence" value="ECO:0007669"/>
    <property type="project" value="TreeGrafter"/>
</dbReference>
<dbReference type="GO" id="GO:0031838">
    <property type="term" value="C:haptoglobin-hemoglobin complex"/>
    <property type="evidence" value="ECO:0007669"/>
    <property type="project" value="TreeGrafter"/>
</dbReference>
<dbReference type="GO" id="GO:0005833">
    <property type="term" value="C:hemoglobin complex"/>
    <property type="evidence" value="ECO:0007669"/>
    <property type="project" value="InterPro"/>
</dbReference>
<dbReference type="GO" id="GO:0031720">
    <property type="term" value="F:haptoglobin binding"/>
    <property type="evidence" value="ECO:0007669"/>
    <property type="project" value="TreeGrafter"/>
</dbReference>
<dbReference type="GO" id="GO:0020037">
    <property type="term" value="F:heme binding"/>
    <property type="evidence" value="ECO:0007669"/>
    <property type="project" value="InterPro"/>
</dbReference>
<dbReference type="GO" id="GO:0046872">
    <property type="term" value="F:metal ion binding"/>
    <property type="evidence" value="ECO:0007669"/>
    <property type="project" value="UniProtKB-KW"/>
</dbReference>
<dbReference type="GO" id="GO:0043177">
    <property type="term" value="F:organic acid binding"/>
    <property type="evidence" value="ECO:0007669"/>
    <property type="project" value="TreeGrafter"/>
</dbReference>
<dbReference type="GO" id="GO:0019825">
    <property type="term" value="F:oxygen binding"/>
    <property type="evidence" value="ECO:0007669"/>
    <property type="project" value="InterPro"/>
</dbReference>
<dbReference type="GO" id="GO:0005344">
    <property type="term" value="F:oxygen carrier activity"/>
    <property type="evidence" value="ECO:0007669"/>
    <property type="project" value="UniProtKB-KW"/>
</dbReference>
<dbReference type="GO" id="GO:0004601">
    <property type="term" value="F:peroxidase activity"/>
    <property type="evidence" value="ECO:0007669"/>
    <property type="project" value="TreeGrafter"/>
</dbReference>
<dbReference type="GO" id="GO:0042744">
    <property type="term" value="P:hydrogen peroxide catabolic process"/>
    <property type="evidence" value="ECO:0007669"/>
    <property type="project" value="TreeGrafter"/>
</dbReference>
<dbReference type="CDD" id="cd08925">
    <property type="entry name" value="Hb-beta-like"/>
    <property type="match status" value="1"/>
</dbReference>
<dbReference type="FunFam" id="1.10.490.10:FF:000001">
    <property type="entry name" value="Hemoglobin subunit beta"/>
    <property type="match status" value="1"/>
</dbReference>
<dbReference type="Gene3D" id="1.10.490.10">
    <property type="entry name" value="Globins"/>
    <property type="match status" value="1"/>
</dbReference>
<dbReference type="InterPro" id="IPR000971">
    <property type="entry name" value="Globin"/>
</dbReference>
<dbReference type="InterPro" id="IPR009050">
    <property type="entry name" value="Globin-like_sf"/>
</dbReference>
<dbReference type="InterPro" id="IPR012292">
    <property type="entry name" value="Globin/Proto"/>
</dbReference>
<dbReference type="InterPro" id="IPR002337">
    <property type="entry name" value="Hemoglobin_b"/>
</dbReference>
<dbReference type="InterPro" id="IPR050056">
    <property type="entry name" value="Hemoglobin_oxygen_transport"/>
</dbReference>
<dbReference type="PANTHER" id="PTHR11442">
    <property type="entry name" value="HEMOGLOBIN FAMILY MEMBER"/>
    <property type="match status" value="1"/>
</dbReference>
<dbReference type="PANTHER" id="PTHR11442:SF7">
    <property type="entry name" value="HEMOGLOBIN SUBUNIT EPSILON"/>
    <property type="match status" value="1"/>
</dbReference>
<dbReference type="Pfam" id="PF00042">
    <property type="entry name" value="Globin"/>
    <property type="match status" value="1"/>
</dbReference>
<dbReference type="PRINTS" id="PR00814">
    <property type="entry name" value="BETAHAEM"/>
</dbReference>
<dbReference type="SUPFAM" id="SSF46458">
    <property type="entry name" value="Globin-like"/>
    <property type="match status" value="1"/>
</dbReference>
<dbReference type="PROSITE" id="PS01033">
    <property type="entry name" value="GLOBIN"/>
    <property type="match status" value="1"/>
</dbReference>
<accession>P15165</accession>
<reference key="1">
    <citation type="journal article" date="1989" name="Biol. Chem. Hoppe-Seyler">
        <title>Amino-acid sequences and functional differentiation of hemoglobins A and D from swift (Apus apus, Apodiformes).</title>
        <authorList>
            <person name="Nothum R."/>
            <person name="Weber R.E."/>
            <person name="Kosters J."/>
            <person name="Schneeganss D."/>
            <person name="Braunitzer G."/>
        </authorList>
    </citation>
    <scope>PROTEIN SEQUENCE</scope>
</reference>